<sequence length="81" mass="9211">MAAVAAASAELLIIGWYIFRVLLQVFLECCIYWVGFAFRNPPGTQPIARSEVFRYSLQKLAHTVSRTGRQVLGERRQRAPN</sequence>
<evidence type="ECO:0000250" key="1"/>
<evidence type="ECO:0000305" key="2"/>
<name>NNAT_MESAU</name>
<accession>Q6JL78</accession>
<reference key="1">
    <citation type="submission" date="2003-09" db="EMBL/GenBank/DDBJ databases">
        <title>Neuronatin expression in the golden hamster central nervous system.</title>
        <authorList>
            <person name="Revel F."/>
            <person name="Simonneaux V."/>
            <person name="Sorensen B.H."/>
            <person name="Pevet P."/>
            <person name="Mikkelsen J.D."/>
        </authorList>
    </citation>
    <scope>NUCLEOTIDE SEQUENCE [MRNA]</scope>
</reference>
<feature type="chain" id="PRO_0000289056" description="Neuronatin">
    <location>
        <begin position="1"/>
        <end position="81"/>
    </location>
</feature>
<comment type="function">
    <text evidence="1">May participate in the maintenance of segment identity in the hindbrain and pituitary development, and maturation or maintenance of the overall structure of the nervous system. May function as a regulatory subunit of ion channels (By similarity).</text>
</comment>
<comment type="similarity">
    <text evidence="2">Belongs to the neuronatin family.</text>
</comment>
<keyword id="KW-0217">Developmental protein</keyword>
<keyword id="KW-1185">Reference proteome</keyword>
<organism>
    <name type="scientific">Mesocricetus auratus</name>
    <name type="common">Golden hamster</name>
    <dbReference type="NCBI Taxonomy" id="10036"/>
    <lineage>
        <taxon>Eukaryota</taxon>
        <taxon>Metazoa</taxon>
        <taxon>Chordata</taxon>
        <taxon>Craniata</taxon>
        <taxon>Vertebrata</taxon>
        <taxon>Euteleostomi</taxon>
        <taxon>Mammalia</taxon>
        <taxon>Eutheria</taxon>
        <taxon>Euarchontoglires</taxon>
        <taxon>Glires</taxon>
        <taxon>Rodentia</taxon>
        <taxon>Myomorpha</taxon>
        <taxon>Muroidea</taxon>
        <taxon>Cricetidae</taxon>
        <taxon>Cricetinae</taxon>
        <taxon>Mesocricetus</taxon>
    </lineage>
</organism>
<proteinExistence type="inferred from homology"/>
<gene>
    <name type="primary">NNAT</name>
</gene>
<protein>
    <recommendedName>
        <fullName>Neuronatin</fullName>
    </recommendedName>
</protein>
<dbReference type="EMBL" id="AY390527">
    <property type="protein sequence ID" value="AAR26384.1"/>
    <property type="molecule type" value="mRNA"/>
</dbReference>
<dbReference type="RefSeq" id="NP_001268867.1">
    <property type="nucleotide sequence ID" value="NM_001281938.1"/>
</dbReference>
<dbReference type="STRING" id="10036.ENSMAUP00000025743"/>
<dbReference type="GeneID" id="101833100"/>
<dbReference type="KEGG" id="maua:101833100"/>
<dbReference type="CTD" id="4826"/>
<dbReference type="eggNOG" id="ENOG502TDP2">
    <property type="taxonomic scope" value="Eukaryota"/>
</dbReference>
<dbReference type="OrthoDB" id="9823442at2759"/>
<dbReference type="Proteomes" id="UP000189706">
    <property type="component" value="Unplaced"/>
</dbReference>
<dbReference type="GO" id="GO:0005737">
    <property type="term" value="C:cytoplasm"/>
    <property type="evidence" value="ECO:0007669"/>
    <property type="project" value="TreeGrafter"/>
</dbReference>
<dbReference type="GO" id="GO:0007420">
    <property type="term" value="P:brain development"/>
    <property type="evidence" value="ECO:0007669"/>
    <property type="project" value="InterPro"/>
</dbReference>
<dbReference type="GO" id="GO:0032024">
    <property type="term" value="P:positive regulation of insulin secretion"/>
    <property type="evidence" value="ECO:0007669"/>
    <property type="project" value="TreeGrafter"/>
</dbReference>
<dbReference type="InterPro" id="IPR024885">
    <property type="entry name" value="Neuronatin"/>
</dbReference>
<dbReference type="PANTHER" id="PTHR15285">
    <property type="entry name" value="NEURONATIN"/>
    <property type="match status" value="1"/>
</dbReference>
<dbReference type="PANTHER" id="PTHR15285:SF0">
    <property type="entry name" value="NEURONATIN"/>
    <property type="match status" value="1"/>
</dbReference>